<name>SCPA_STRPC</name>
<feature type="chain" id="PRO_1000069981" description="Segregation and condensation protein A">
    <location>
        <begin position="1"/>
        <end position="234"/>
    </location>
</feature>
<gene>
    <name evidence="1" type="primary">scpA</name>
    <name type="ordered locus">MGAS9429_Spy0307</name>
</gene>
<organism>
    <name type="scientific">Streptococcus pyogenes serotype M12 (strain MGAS9429)</name>
    <dbReference type="NCBI Taxonomy" id="370551"/>
    <lineage>
        <taxon>Bacteria</taxon>
        <taxon>Bacillati</taxon>
        <taxon>Bacillota</taxon>
        <taxon>Bacilli</taxon>
        <taxon>Lactobacillales</taxon>
        <taxon>Streptococcaceae</taxon>
        <taxon>Streptococcus</taxon>
    </lineage>
</organism>
<protein>
    <recommendedName>
        <fullName evidence="1">Segregation and condensation protein A</fullName>
    </recommendedName>
</protein>
<sequence length="234" mass="27366">MDIKLKDFEGPLDLLLHLVSQYKVDIYEVPIVEVIEQYLNYIETLQVMKLEVAGDYMLMASQLMLIKSRRLLPKVVEHIEEEDLEQDLLEKIEEYSRFKAVSQALAKQHDQRAKWYSKPKQELIFEDAILQEDKTVMDLFLAFSNIMAAKRAVLKTNHTVIERDDYKIEDMMASIKQRLEKENVISLSAIFEECQTLNEVISIFLASLELIKLHVVFVEQLSNFGAIILRKEKK</sequence>
<keyword id="KW-0131">Cell cycle</keyword>
<keyword id="KW-0132">Cell division</keyword>
<keyword id="KW-0159">Chromosome partition</keyword>
<keyword id="KW-0963">Cytoplasm</keyword>
<accession>Q1JNA4</accession>
<evidence type="ECO:0000255" key="1">
    <source>
        <dbReference type="HAMAP-Rule" id="MF_01805"/>
    </source>
</evidence>
<proteinExistence type="inferred from homology"/>
<dbReference type="EMBL" id="CP000259">
    <property type="protein sequence ID" value="ABF31495.1"/>
    <property type="molecule type" value="Genomic_DNA"/>
</dbReference>
<dbReference type="RefSeq" id="WP_002990972.1">
    <property type="nucleotide sequence ID" value="NC_008021.1"/>
</dbReference>
<dbReference type="SMR" id="Q1JNA4"/>
<dbReference type="KEGG" id="spk:MGAS9429_Spy0307"/>
<dbReference type="HOGENOM" id="CLU_038686_3_3_9"/>
<dbReference type="Proteomes" id="UP000002433">
    <property type="component" value="Chromosome"/>
</dbReference>
<dbReference type="GO" id="GO:0005737">
    <property type="term" value="C:cytoplasm"/>
    <property type="evidence" value="ECO:0007669"/>
    <property type="project" value="UniProtKB-SubCell"/>
</dbReference>
<dbReference type="GO" id="GO:0051301">
    <property type="term" value="P:cell division"/>
    <property type="evidence" value="ECO:0007669"/>
    <property type="project" value="UniProtKB-KW"/>
</dbReference>
<dbReference type="GO" id="GO:0007059">
    <property type="term" value="P:chromosome segregation"/>
    <property type="evidence" value="ECO:0007669"/>
    <property type="project" value="UniProtKB-UniRule"/>
</dbReference>
<dbReference type="GO" id="GO:0006260">
    <property type="term" value="P:DNA replication"/>
    <property type="evidence" value="ECO:0007669"/>
    <property type="project" value="UniProtKB-UniRule"/>
</dbReference>
<dbReference type="Gene3D" id="6.10.250.2410">
    <property type="match status" value="1"/>
</dbReference>
<dbReference type="HAMAP" id="MF_01805">
    <property type="entry name" value="ScpA"/>
    <property type="match status" value="1"/>
</dbReference>
<dbReference type="InterPro" id="IPR003768">
    <property type="entry name" value="ScpA"/>
</dbReference>
<dbReference type="NCBIfam" id="NF000993">
    <property type="entry name" value="PRK00104.1-2"/>
    <property type="match status" value="1"/>
</dbReference>
<dbReference type="PANTHER" id="PTHR33969">
    <property type="entry name" value="SEGREGATION AND CONDENSATION PROTEIN A"/>
    <property type="match status" value="1"/>
</dbReference>
<dbReference type="PANTHER" id="PTHR33969:SF2">
    <property type="entry name" value="SEGREGATION AND CONDENSATION PROTEIN A"/>
    <property type="match status" value="1"/>
</dbReference>
<dbReference type="Pfam" id="PF02616">
    <property type="entry name" value="SMC_ScpA"/>
    <property type="match status" value="1"/>
</dbReference>
<reference key="1">
    <citation type="journal article" date="2006" name="Proc. Natl. Acad. Sci. U.S.A.">
        <title>Molecular genetic anatomy of inter- and intraserotype variation in the human bacterial pathogen group A Streptococcus.</title>
        <authorList>
            <person name="Beres S.B."/>
            <person name="Richter E.W."/>
            <person name="Nagiec M.J."/>
            <person name="Sumby P."/>
            <person name="Porcella S.F."/>
            <person name="DeLeo F.R."/>
            <person name="Musser J.M."/>
        </authorList>
    </citation>
    <scope>NUCLEOTIDE SEQUENCE [LARGE SCALE GENOMIC DNA]</scope>
    <source>
        <strain>MGAS9429</strain>
    </source>
</reference>
<comment type="function">
    <text evidence="1">Participates in chromosomal partition during cell division. May act via the formation of a condensin-like complex containing Smc and ScpB that pull DNA away from mid-cell into both cell halves.</text>
</comment>
<comment type="subunit">
    <text evidence="1">Component of a cohesin-like complex composed of ScpA, ScpB and the Smc homodimer, in which ScpA and ScpB bind to the head domain of Smc. The presence of the three proteins is required for the association of the complex with DNA.</text>
</comment>
<comment type="subcellular location">
    <subcellularLocation>
        <location evidence="1">Cytoplasm</location>
    </subcellularLocation>
    <text evidence="1">Associated with two foci at the outer edges of the nucleoid region in young cells, and at four foci within both cell halves in older cells.</text>
</comment>
<comment type="similarity">
    <text evidence="1">Belongs to the ScpA family.</text>
</comment>